<organism>
    <name type="scientific">Cryptococcus neoformans var. neoformans serotype D (strain JEC21 / ATCC MYA-565)</name>
    <name type="common">Filobasidiella neoformans</name>
    <dbReference type="NCBI Taxonomy" id="214684"/>
    <lineage>
        <taxon>Eukaryota</taxon>
        <taxon>Fungi</taxon>
        <taxon>Dikarya</taxon>
        <taxon>Basidiomycota</taxon>
        <taxon>Agaricomycotina</taxon>
        <taxon>Tremellomycetes</taxon>
        <taxon>Tremellales</taxon>
        <taxon>Cryptococcaceae</taxon>
        <taxon>Cryptococcus</taxon>
        <taxon>Cryptococcus neoformans species complex</taxon>
    </lineage>
</organism>
<feature type="chain" id="PRO_0000365058" description="Eukaryotic translation initiation factor 3 subunit K">
    <location>
        <begin position="1"/>
        <end position="250"/>
    </location>
</feature>
<feature type="domain" description="PCI" evidence="2">
    <location>
        <begin position="54"/>
        <end position="235"/>
    </location>
</feature>
<name>EIF3K_CRYNJ</name>
<reference key="1">
    <citation type="journal article" date="2005" name="Science">
        <title>The genome of the basidiomycetous yeast and human pathogen Cryptococcus neoformans.</title>
        <authorList>
            <person name="Loftus B.J."/>
            <person name="Fung E."/>
            <person name="Roncaglia P."/>
            <person name="Rowley D."/>
            <person name="Amedeo P."/>
            <person name="Bruno D."/>
            <person name="Vamathevan J."/>
            <person name="Miranda M."/>
            <person name="Anderson I.J."/>
            <person name="Fraser J.A."/>
            <person name="Allen J.E."/>
            <person name="Bosdet I.E."/>
            <person name="Brent M.R."/>
            <person name="Chiu R."/>
            <person name="Doering T.L."/>
            <person name="Donlin M.J."/>
            <person name="D'Souza C.A."/>
            <person name="Fox D.S."/>
            <person name="Grinberg V."/>
            <person name="Fu J."/>
            <person name="Fukushima M."/>
            <person name="Haas B.J."/>
            <person name="Huang J.C."/>
            <person name="Janbon G."/>
            <person name="Jones S.J.M."/>
            <person name="Koo H.L."/>
            <person name="Krzywinski M.I."/>
            <person name="Kwon-Chung K.J."/>
            <person name="Lengeler K.B."/>
            <person name="Maiti R."/>
            <person name="Marra M.A."/>
            <person name="Marra R.E."/>
            <person name="Mathewson C.A."/>
            <person name="Mitchell T.G."/>
            <person name="Pertea M."/>
            <person name="Riggs F.R."/>
            <person name="Salzberg S.L."/>
            <person name="Schein J.E."/>
            <person name="Shvartsbeyn A."/>
            <person name="Shin H."/>
            <person name="Shumway M."/>
            <person name="Specht C.A."/>
            <person name="Suh B.B."/>
            <person name="Tenney A."/>
            <person name="Utterback T.R."/>
            <person name="Wickes B.L."/>
            <person name="Wortman J.R."/>
            <person name="Wye N.H."/>
            <person name="Kronstad J.W."/>
            <person name="Lodge J.K."/>
            <person name="Heitman J."/>
            <person name="Davis R.W."/>
            <person name="Fraser C.M."/>
            <person name="Hyman R.W."/>
        </authorList>
    </citation>
    <scope>NUCLEOTIDE SEQUENCE [LARGE SCALE GENOMIC DNA]</scope>
    <source>
        <strain>JEC21 / ATCC MYA-565</strain>
    </source>
</reference>
<sequence>MVTAVSPENLKEWHTPSTRPDVIHELIHGVDRYNPSNLPFMEDYLATELKEGQYDLFGNLAILKLYQFNPQHSNPDVIINILIKALAATVSGPDFNLCLEMLREPSAILHDIESADEALVIVMPYLQRLHELSRTCQFTKFWQEINSDSEAAKILRTRYLPQHASPLDDFRFIFSASIASCFRRISLSQLSRWLDIPSDKVGEWCSKVEWTVEGQDAVIPNNGQNDVKAGVVKENVQLGQLTKLVAAAGY</sequence>
<gene>
    <name type="ordered locus">CND02370</name>
</gene>
<evidence type="ECO:0000255" key="1">
    <source>
        <dbReference type="HAMAP-Rule" id="MF_03010"/>
    </source>
</evidence>
<evidence type="ECO:0000255" key="2">
    <source>
        <dbReference type="PROSITE-ProRule" id="PRU01185"/>
    </source>
</evidence>
<protein>
    <recommendedName>
        <fullName evidence="1">Eukaryotic translation initiation factor 3 subunit K</fullName>
        <shortName evidence="1">eIF3k</shortName>
    </recommendedName>
    <alternativeName>
        <fullName evidence="1">eIF-3 p25</fullName>
    </alternativeName>
</protein>
<proteinExistence type="inferred from homology"/>
<dbReference type="EMBL" id="AE017344">
    <property type="protein sequence ID" value="AAW42958.1"/>
    <property type="molecule type" value="Genomic_DNA"/>
</dbReference>
<dbReference type="RefSeq" id="XP_024512677.1">
    <property type="nucleotide sequence ID" value="XM_024656998.1"/>
</dbReference>
<dbReference type="RefSeq" id="XP_570265.1">
    <property type="nucleotide sequence ID" value="XM_570265.1"/>
</dbReference>
<dbReference type="SMR" id="P0CN54"/>
<dbReference type="STRING" id="214684.P0CN54"/>
<dbReference type="PaxDb" id="214684-P0CN54"/>
<dbReference type="EnsemblFungi" id="AAW42958">
    <property type="protein sequence ID" value="AAW42958"/>
    <property type="gene ID" value="CND02370"/>
</dbReference>
<dbReference type="GeneID" id="3257476"/>
<dbReference type="VEuPathDB" id="FungiDB:CND02370"/>
<dbReference type="eggNOG" id="KOG3252">
    <property type="taxonomic scope" value="Eukaryota"/>
</dbReference>
<dbReference type="HOGENOM" id="CLU_076723_0_0_1"/>
<dbReference type="InParanoid" id="P0CN54"/>
<dbReference type="OMA" id="GDDLCAD"/>
<dbReference type="OrthoDB" id="337745at2759"/>
<dbReference type="Proteomes" id="UP000002149">
    <property type="component" value="Chromosome 4"/>
</dbReference>
<dbReference type="GO" id="GO:0016282">
    <property type="term" value="C:eukaryotic 43S preinitiation complex"/>
    <property type="evidence" value="ECO:0007669"/>
    <property type="project" value="UniProtKB-UniRule"/>
</dbReference>
<dbReference type="GO" id="GO:0033290">
    <property type="term" value="C:eukaryotic 48S preinitiation complex"/>
    <property type="evidence" value="ECO:0007669"/>
    <property type="project" value="UniProtKB-UniRule"/>
</dbReference>
<dbReference type="GO" id="GO:0005852">
    <property type="term" value="C:eukaryotic translation initiation factor 3 complex"/>
    <property type="evidence" value="ECO:0000318"/>
    <property type="project" value="GO_Central"/>
</dbReference>
<dbReference type="GO" id="GO:0043022">
    <property type="term" value="F:ribosome binding"/>
    <property type="evidence" value="ECO:0007669"/>
    <property type="project" value="InterPro"/>
</dbReference>
<dbReference type="GO" id="GO:0003723">
    <property type="term" value="F:RNA binding"/>
    <property type="evidence" value="ECO:0007669"/>
    <property type="project" value="UniProtKB-UniRule"/>
</dbReference>
<dbReference type="GO" id="GO:0003743">
    <property type="term" value="F:translation initiation factor activity"/>
    <property type="evidence" value="ECO:0007669"/>
    <property type="project" value="UniProtKB-UniRule"/>
</dbReference>
<dbReference type="GO" id="GO:0001732">
    <property type="term" value="P:formation of cytoplasmic translation initiation complex"/>
    <property type="evidence" value="ECO:0007669"/>
    <property type="project" value="UniProtKB-UniRule"/>
</dbReference>
<dbReference type="GO" id="GO:0006446">
    <property type="term" value="P:regulation of translational initiation"/>
    <property type="evidence" value="ECO:0007669"/>
    <property type="project" value="InterPro"/>
</dbReference>
<dbReference type="FunFam" id="1.25.40.250:FF:000001">
    <property type="entry name" value="Eukaryotic translation initiation factor 3 subunit K"/>
    <property type="match status" value="1"/>
</dbReference>
<dbReference type="Gene3D" id="1.25.40.250">
    <property type="entry name" value="ARM repeat, domain 1"/>
    <property type="match status" value="1"/>
</dbReference>
<dbReference type="Gene3D" id="1.10.10.10">
    <property type="entry name" value="Winged helix-like DNA-binding domain superfamily/Winged helix DNA-binding domain"/>
    <property type="match status" value="1"/>
</dbReference>
<dbReference type="HAMAP" id="MF_03010">
    <property type="entry name" value="eIF3k"/>
    <property type="match status" value="1"/>
</dbReference>
<dbReference type="InterPro" id="IPR016024">
    <property type="entry name" value="ARM-type_fold"/>
</dbReference>
<dbReference type="InterPro" id="IPR033464">
    <property type="entry name" value="CSN8_PSD8_EIF3K"/>
</dbReference>
<dbReference type="InterPro" id="IPR009374">
    <property type="entry name" value="eIF3k"/>
</dbReference>
<dbReference type="InterPro" id="IPR000717">
    <property type="entry name" value="PCI_dom"/>
</dbReference>
<dbReference type="InterPro" id="IPR016020">
    <property type="entry name" value="Transl_init_fac_sub12_N_euk"/>
</dbReference>
<dbReference type="InterPro" id="IPR036388">
    <property type="entry name" value="WH-like_DNA-bd_sf"/>
</dbReference>
<dbReference type="InterPro" id="IPR036390">
    <property type="entry name" value="WH_DNA-bd_sf"/>
</dbReference>
<dbReference type="PANTHER" id="PTHR13022">
    <property type="entry name" value="EUKARYOTIC TRANSLATION INITIATION FACTOR 3 SUBUNIT 11"/>
    <property type="match status" value="1"/>
</dbReference>
<dbReference type="PANTHER" id="PTHR13022:SF0">
    <property type="entry name" value="EUKARYOTIC TRANSLATION INITIATION FACTOR 3 SUBUNIT K"/>
    <property type="match status" value="1"/>
</dbReference>
<dbReference type="Pfam" id="PF10075">
    <property type="entry name" value="CSN8_PSD8_EIF3K"/>
    <property type="match status" value="1"/>
</dbReference>
<dbReference type="SUPFAM" id="SSF48371">
    <property type="entry name" value="ARM repeat"/>
    <property type="match status" value="1"/>
</dbReference>
<dbReference type="SUPFAM" id="SSF46785">
    <property type="entry name" value="Winged helix' DNA-binding domain"/>
    <property type="match status" value="1"/>
</dbReference>
<dbReference type="PROSITE" id="PS50250">
    <property type="entry name" value="PCI"/>
    <property type="match status" value="1"/>
</dbReference>
<comment type="function">
    <text evidence="1">Component of the eukaryotic translation initiation factor 3 (eIF-3) complex, which is involved in protein synthesis of a specialized repertoire of mRNAs and, together with other initiation factors, stimulates binding of mRNA and methionyl-tRNAi to the 40S ribosome. The eIF-3 complex specifically targets and initiates translation of a subset of mRNAs involved in cell proliferation.</text>
</comment>
<comment type="subunit">
    <text evidence="1">Component of the eukaryotic translation initiation factor 3 (eIF-3) complex.</text>
</comment>
<comment type="subcellular location">
    <subcellularLocation>
        <location evidence="1">Cytoplasm</location>
    </subcellularLocation>
</comment>
<comment type="similarity">
    <text evidence="1">Belongs to the eIF-3 subunit K family.</text>
</comment>
<keyword id="KW-0963">Cytoplasm</keyword>
<keyword id="KW-0396">Initiation factor</keyword>
<keyword id="KW-0648">Protein biosynthesis</keyword>
<keyword id="KW-1185">Reference proteome</keyword>
<accession>P0CN54</accession>
<accession>Q55TQ4</accession>
<accession>Q5KIN1</accession>